<reference key="1">
    <citation type="journal article" date="2002" name="J. Bacteriol.">
        <title>Whole-genome comparison of Mycobacterium tuberculosis clinical and laboratory strains.</title>
        <authorList>
            <person name="Fleischmann R.D."/>
            <person name="Alland D."/>
            <person name="Eisen J.A."/>
            <person name="Carpenter L."/>
            <person name="White O."/>
            <person name="Peterson J.D."/>
            <person name="DeBoy R.T."/>
            <person name="Dodson R.J."/>
            <person name="Gwinn M.L."/>
            <person name="Haft D.H."/>
            <person name="Hickey E.K."/>
            <person name="Kolonay J.F."/>
            <person name="Nelson W.C."/>
            <person name="Umayam L.A."/>
            <person name="Ermolaeva M.D."/>
            <person name="Salzberg S.L."/>
            <person name="Delcher A."/>
            <person name="Utterback T.R."/>
            <person name="Weidman J.F."/>
            <person name="Khouri H.M."/>
            <person name="Gill J."/>
            <person name="Mikula A."/>
            <person name="Bishai W."/>
            <person name="Jacobs W.R. Jr."/>
            <person name="Venter J.C."/>
            <person name="Fraser C.M."/>
        </authorList>
    </citation>
    <scope>NUCLEOTIDE SEQUENCE [LARGE SCALE GENOMIC DNA]</scope>
    <source>
        <strain>CDC 1551 / Oshkosh</strain>
    </source>
</reference>
<feature type="chain" id="PRO_0000427280" description="Imidazole glycerol phosphate synthase subunit HisH">
    <location>
        <begin position="1"/>
        <end position="206"/>
    </location>
</feature>
<feature type="domain" description="Glutamine amidotransferase type-1">
    <location>
        <begin position="5"/>
        <end position="206"/>
    </location>
</feature>
<feature type="active site" description="Nucleophile" evidence="1">
    <location>
        <position position="83"/>
    </location>
</feature>
<feature type="active site" evidence="1">
    <location>
        <position position="187"/>
    </location>
</feature>
<feature type="active site" evidence="1">
    <location>
        <position position="189"/>
    </location>
</feature>
<comment type="function">
    <text evidence="1">IGPS catalyzes the conversion of PRFAR and glutamine to IGP, AICAR and glutamate. The HisH subunit catalyzes the hydrolysis of glutamine to glutamate and ammonia as part of the synthesis of IGP and AICAR. The resulting ammonia molecule is channeled to the active site of HisF (By similarity).</text>
</comment>
<comment type="catalytic activity">
    <reaction>
        <text>5-[(5-phospho-1-deoxy-D-ribulos-1-ylimino)methylamino]-1-(5-phospho-beta-D-ribosyl)imidazole-4-carboxamide + L-glutamine = D-erythro-1-(imidazol-4-yl)glycerol 3-phosphate + 5-amino-1-(5-phospho-beta-D-ribosyl)imidazole-4-carboxamide + L-glutamate + H(+)</text>
        <dbReference type="Rhea" id="RHEA:24793"/>
        <dbReference type="ChEBI" id="CHEBI:15378"/>
        <dbReference type="ChEBI" id="CHEBI:29985"/>
        <dbReference type="ChEBI" id="CHEBI:58278"/>
        <dbReference type="ChEBI" id="CHEBI:58359"/>
        <dbReference type="ChEBI" id="CHEBI:58475"/>
        <dbReference type="ChEBI" id="CHEBI:58525"/>
        <dbReference type="EC" id="4.3.2.10"/>
    </reaction>
</comment>
<comment type="catalytic activity">
    <reaction>
        <text>L-glutamine + H2O = L-glutamate + NH4(+)</text>
        <dbReference type="Rhea" id="RHEA:15889"/>
        <dbReference type="ChEBI" id="CHEBI:15377"/>
        <dbReference type="ChEBI" id="CHEBI:28938"/>
        <dbReference type="ChEBI" id="CHEBI:29985"/>
        <dbReference type="ChEBI" id="CHEBI:58359"/>
        <dbReference type="EC" id="3.5.1.2"/>
    </reaction>
</comment>
<comment type="pathway">
    <text>Amino-acid biosynthesis; L-histidine biosynthesis; L-histidine from 5-phospho-alpha-D-ribose 1-diphosphate: step 5/9.</text>
</comment>
<comment type="subunit">
    <text evidence="1">Heterodimer of HisH and HisF.</text>
</comment>
<comment type="subcellular location">
    <subcellularLocation>
        <location evidence="1">Cytoplasm</location>
    </subcellularLocation>
</comment>
<organism>
    <name type="scientific">Mycobacterium tuberculosis (strain CDC 1551 / Oshkosh)</name>
    <dbReference type="NCBI Taxonomy" id="83331"/>
    <lineage>
        <taxon>Bacteria</taxon>
        <taxon>Bacillati</taxon>
        <taxon>Actinomycetota</taxon>
        <taxon>Actinomycetes</taxon>
        <taxon>Mycobacteriales</taxon>
        <taxon>Mycobacteriaceae</taxon>
        <taxon>Mycobacterium</taxon>
        <taxon>Mycobacterium tuberculosis complex</taxon>
    </lineage>
</organism>
<protein>
    <recommendedName>
        <fullName>Imidazole glycerol phosphate synthase subunit HisH</fullName>
        <ecNumber>4.3.2.10</ecNumber>
    </recommendedName>
    <alternativeName>
        <fullName>IGP synthase glutaminase subunit</fullName>
        <ecNumber>3.5.1.2</ecNumber>
    </alternativeName>
    <alternativeName>
        <fullName>IGP synthase subunit HisH</fullName>
    </alternativeName>
    <alternativeName>
        <fullName>ImGP synthase subunit HisH</fullName>
        <shortName>IGPS subunit HisH</shortName>
    </alternativeName>
</protein>
<gene>
    <name type="primary">hisH</name>
    <name type="ordered locus">MT1638</name>
</gene>
<sequence length="206" mass="21446">MTAKSVVVLDYGSGNLRSAQRALQRVGAEVEVTADTDAAMTADGLVVPGVGAFAACMAGLRKISGERIIAERVAAGRPVLGVCVGMQILFACGVEFGVQTPGCGHWPGAVIRLEAPVIPHMGWNVVDSAAGSALFKGLDVDARFYFVHSYAAQRWEGSPDALLTWATYRAPFLAAVEDGALAATQFHPEKSGDAGAAVLSNWVDGL</sequence>
<keyword id="KW-0028">Amino-acid biosynthesis</keyword>
<keyword id="KW-0963">Cytoplasm</keyword>
<keyword id="KW-0315">Glutamine amidotransferase</keyword>
<keyword id="KW-0368">Histidine biosynthesis</keyword>
<keyword id="KW-0378">Hydrolase</keyword>
<keyword id="KW-0456">Lyase</keyword>
<keyword id="KW-1185">Reference proteome</keyword>
<evidence type="ECO:0000250" key="1"/>
<accession>P9WMM0</accession>
<accession>L0T767</accession>
<accession>O06589</accession>
<dbReference type="EC" id="4.3.2.10"/>
<dbReference type="EC" id="3.5.1.2"/>
<dbReference type="EMBL" id="AE000516">
    <property type="protein sequence ID" value="AAK45906.1"/>
    <property type="molecule type" value="Genomic_DNA"/>
</dbReference>
<dbReference type="PIR" id="D70544">
    <property type="entry name" value="D70544"/>
</dbReference>
<dbReference type="RefSeq" id="WP_003407952.1">
    <property type="nucleotide sequence ID" value="NZ_KK341227.1"/>
</dbReference>
<dbReference type="SMR" id="P9WMM0"/>
<dbReference type="KEGG" id="mtc:MT1638"/>
<dbReference type="PATRIC" id="fig|83331.31.peg.1760"/>
<dbReference type="HOGENOM" id="CLU_071837_1_0_11"/>
<dbReference type="UniPathway" id="UPA00031">
    <property type="reaction ID" value="UER00010"/>
</dbReference>
<dbReference type="Proteomes" id="UP000001020">
    <property type="component" value="Chromosome"/>
</dbReference>
<dbReference type="GO" id="GO:0005737">
    <property type="term" value="C:cytoplasm"/>
    <property type="evidence" value="ECO:0007669"/>
    <property type="project" value="UniProtKB-SubCell"/>
</dbReference>
<dbReference type="GO" id="GO:0004359">
    <property type="term" value="F:glutaminase activity"/>
    <property type="evidence" value="ECO:0007669"/>
    <property type="project" value="UniProtKB-EC"/>
</dbReference>
<dbReference type="GO" id="GO:0000107">
    <property type="term" value="F:imidazoleglycerol-phosphate synthase activity"/>
    <property type="evidence" value="ECO:0007669"/>
    <property type="project" value="UniProtKB-UniRule"/>
</dbReference>
<dbReference type="GO" id="GO:0016829">
    <property type="term" value="F:lyase activity"/>
    <property type="evidence" value="ECO:0007669"/>
    <property type="project" value="UniProtKB-KW"/>
</dbReference>
<dbReference type="GO" id="GO:0000105">
    <property type="term" value="P:L-histidine biosynthetic process"/>
    <property type="evidence" value="ECO:0007669"/>
    <property type="project" value="UniProtKB-UniRule"/>
</dbReference>
<dbReference type="CDD" id="cd01748">
    <property type="entry name" value="GATase1_IGP_Synthase"/>
    <property type="match status" value="1"/>
</dbReference>
<dbReference type="FunFam" id="3.40.50.880:FF:000056">
    <property type="entry name" value="Imidazole glycerol phosphate synthase subunit HisH"/>
    <property type="match status" value="1"/>
</dbReference>
<dbReference type="Gene3D" id="3.40.50.880">
    <property type="match status" value="1"/>
</dbReference>
<dbReference type="HAMAP" id="MF_00278">
    <property type="entry name" value="HisH"/>
    <property type="match status" value="1"/>
</dbReference>
<dbReference type="InterPro" id="IPR029062">
    <property type="entry name" value="Class_I_gatase-like"/>
</dbReference>
<dbReference type="InterPro" id="IPR017926">
    <property type="entry name" value="GATASE"/>
</dbReference>
<dbReference type="InterPro" id="IPR010139">
    <property type="entry name" value="Imidazole-glycPsynth_HisH"/>
</dbReference>
<dbReference type="NCBIfam" id="TIGR01855">
    <property type="entry name" value="IMP_synth_hisH"/>
    <property type="match status" value="1"/>
</dbReference>
<dbReference type="PANTHER" id="PTHR42701">
    <property type="entry name" value="IMIDAZOLE GLYCEROL PHOSPHATE SYNTHASE SUBUNIT HISH"/>
    <property type="match status" value="1"/>
</dbReference>
<dbReference type="PANTHER" id="PTHR42701:SF1">
    <property type="entry name" value="IMIDAZOLE GLYCEROL PHOSPHATE SYNTHASE SUBUNIT HISH"/>
    <property type="match status" value="1"/>
</dbReference>
<dbReference type="Pfam" id="PF00117">
    <property type="entry name" value="GATase"/>
    <property type="match status" value="1"/>
</dbReference>
<dbReference type="PIRSF" id="PIRSF000495">
    <property type="entry name" value="Amidotransf_hisH"/>
    <property type="match status" value="1"/>
</dbReference>
<dbReference type="SUPFAM" id="SSF52317">
    <property type="entry name" value="Class I glutamine amidotransferase-like"/>
    <property type="match status" value="1"/>
</dbReference>
<dbReference type="PROSITE" id="PS51273">
    <property type="entry name" value="GATASE_TYPE_1"/>
    <property type="match status" value="1"/>
</dbReference>
<name>HIS5_MYCTO</name>
<proteinExistence type="inferred from homology"/>